<dbReference type="EMBL" id="CP001638">
    <property type="protein sequence ID" value="ACS23895.1"/>
    <property type="molecule type" value="Genomic_DNA"/>
</dbReference>
<dbReference type="SMR" id="C5D8N8"/>
<dbReference type="STRING" id="471223.GWCH70_1035"/>
<dbReference type="KEGG" id="gwc:GWCH70_1035"/>
<dbReference type="eggNOG" id="COG1799">
    <property type="taxonomic scope" value="Bacteria"/>
</dbReference>
<dbReference type="HOGENOM" id="CLU_078499_4_1_9"/>
<dbReference type="OrthoDB" id="9815206at2"/>
<dbReference type="GO" id="GO:0005737">
    <property type="term" value="C:cytoplasm"/>
    <property type="evidence" value="ECO:0007669"/>
    <property type="project" value="UniProtKB-SubCell"/>
</dbReference>
<dbReference type="GO" id="GO:0000917">
    <property type="term" value="P:division septum assembly"/>
    <property type="evidence" value="ECO:0007669"/>
    <property type="project" value="UniProtKB-KW"/>
</dbReference>
<dbReference type="GO" id="GO:0043093">
    <property type="term" value="P:FtsZ-dependent cytokinesis"/>
    <property type="evidence" value="ECO:0007669"/>
    <property type="project" value="UniProtKB-UniRule"/>
</dbReference>
<dbReference type="Gene3D" id="3.30.110.150">
    <property type="entry name" value="SepF-like protein"/>
    <property type="match status" value="1"/>
</dbReference>
<dbReference type="HAMAP" id="MF_01197">
    <property type="entry name" value="SepF"/>
    <property type="match status" value="1"/>
</dbReference>
<dbReference type="InterPro" id="IPR023052">
    <property type="entry name" value="Cell_div_SepF"/>
</dbReference>
<dbReference type="InterPro" id="IPR007561">
    <property type="entry name" value="Cell_div_SepF/SepF-rel"/>
</dbReference>
<dbReference type="InterPro" id="IPR038594">
    <property type="entry name" value="SepF-like_sf"/>
</dbReference>
<dbReference type="PANTHER" id="PTHR35798">
    <property type="entry name" value="CELL DIVISION PROTEIN SEPF"/>
    <property type="match status" value="1"/>
</dbReference>
<dbReference type="PANTHER" id="PTHR35798:SF1">
    <property type="entry name" value="CELL DIVISION PROTEIN SEPF"/>
    <property type="match status" value="1"/>
</dbReference>
<dbReference type="Pfam" id="PF04472">
    <property type="entry name" value="SepF"/>
    <property type="match status" value="1"/>
</dbReference>
<organism>
    <name type="scientific">Geobacillus sp. (strain WCH70)</name>
    <dbReference type="NCBI Taxonomy" id="471223"/>
    <lineage>
        <taxon>Bacteria</taxon>
        <taxon>Bacillati</taxon>
        <taxon>Bacillota</taxon>
        <taxon>Bacilli</taxon>
        <taxon>Bacillales</taxon>
        <taxon>Anoxybacillaceae</taxon>
        <taxon>Geobacillus</taxon>
    </lineage>
</organism>
<protein>
    <recommendedName>
        <fullName evidence="1">Cell division protein SepF</fullName>
    </recommendedName>
</protein>
<gene>
    <name evidence="1" type="primary">sepF</name>
    <name type="ordered locus">GWCH70_1035</name>
</gene>
<keyword id="KW-0131">Cell cycle</keyword>
<keyword id="KW-0132">Cell division</keyword>
<keyword id="KW-0963">Cytoplasm</keyword>
<keyword id="KW-0717">Septation</keyword>
<comment type="function">
    <text evidence="1">Cell division protein that is part of the divisome complex and is recruited early to the Z-ring. Probably stimulates Z-ring formation, perhaps through the cross-linking of FtsZ protofilaments. Its function overlaps with FtsA.</text>
</comment>
<comment type="subunit">
    <text evidence="1">Homodimer. Interacts with FtsZ.</text>
</comment>
<comment type="subcellular location">
    <subcellularLocation>
        <location evidence="1">Cytoplasm</location>
    </subcellularLocation>
    <text evidence="1">Localizes to the division site, in a FtsZ-dependent manner.</text>
</comment>
<comment type="similarity">
    <text evidence="1">Belongs to the SepF family.</text>
</comment>
<feature type="chain" id="PRO_1000213811" description="Cell division protein SepF">
    <location>
        <begin position="1"/>
        <end position="144"/>
    </location>
</feature>
<sequence length="144" mass="16604">MGLIKKFKDYFLEEDYEEYEEYEEEYEEEEEMRQATKANTKSNVVSLQSVQKSSKVVLIEPRAYAEAQEIADHLKNRRAVVVNLQRIQHEQAKRIVDFLSGTVYAIGGDIQQVGTKIFLCTPDNVDVTGSISIDSDDDTSMKRW</sequence>
<proteinExistence type="inferred from homology"/>
<accession>C5D8N8</accession>
<reference key="1">
    <citation type="submission" date="2009-06" db="EMBL/GenBank/DDBJ databases">
        <title>Complete sequence of chromosome of Geopacillus sp. WCH70.</title>
        <authorList>
            <consortium name="US DOE Joint Genome Institute"/>
            <person name="Lucas S."/>
            <person name="Copeland A."/>
            <person name="Lapidus A."/>
            <person name="Glavina del Rio T."/>
            <person name="Dalin E."/>
            <person name="Tice H."/>
            <person name="Bruce D."/>
            <person name="Goodwin L."/>
            <person name="Pitluck S."/>
            <person name="Chertkov O."/>
            <person name="Brettin T."/>
            <person name="Detter J.C."/>
            <person name="Han C."/>
            <person name="Larimer F."/>
            <person name="Land M."/>
            <person name="Hauser L."/>
            <person name="Kyrpides N."/>
            <person name="Mikhailova N."/>
            <person name="Brumm P."/>
            <person name="Mead D.A."/>
            <person name="Richardson P."/>
        </authorList>
    </citation>
    <scope>NUCLEOTIDE SEQUENCE [LARGE SCALE GENOMIC DNA]</scope>
    <source>
        <strain>WCH70</strain>
    </source>
</reference>
<name>SEPF_GEOSW</name>
<evidence type="ECO:0000255" key="1">
    <source>
        <dbReference type="HAMAP-Rule" id="MF_01197"/>
    </source>
</evidence>